<gene>
    <name evidence="1" type="primary">rnpA</name>
    <name type="ordered locus">Dtur_0121</name>
</gene>
<feature type="chain" id="PRO_1000194634" description="Ribonuclease P protein component">
    <location>
        <begin position="1"/>
        <end position="119"/>
    </location>
</feature>
<name>RNPA_DICTD</name>
<organism>
    <name type="scientific">Dictyoglomus turgidum (strain DSM 6724 / Z-1310)</name>
    <dbReference type="NCBI Taxonomy" id="515635"/>
    <lineage>
        <taxon>Bacteria</taxon>
        <taxon>Pseudomonadati</taxon>
        <taxon>Dictyoglomota</taxon>
        <taxon>Dictyoglomia</taxon>
        <taxon>Dictyoglomales</taxon>
        <taxon>Dictyoglomaceae</taxon>
        <taxon>Dictyoglomus</taxon>
    </lineage>
</organism>
<comment type="function">
    <text evidence="1">RNaseP catalyzes the removal of the 5'-leader sequence from pre-tRNA to produce the mature 5'-terminus. It can also cleave other RNA substrates such as 4.5S RNA. The protein component plays an auxiliary but essential role in vivo by binding to the 5'-leader sequence and broadening the substrate specificity of the ribozyme.</text>
</comment>
<comment type="catalytic activity">
    <reaction evidence="1">
        <text>Endonucleolytic cleavage of RNA, removing 5'-extranucleotides from tRNA precursor.</text>
        <dbReference type="EC" id="3.1.26.5"/>
    </reaction>
</comment>
<comment type="subunit">
    <text evidence="1">Consists of a catalytic RNA component (M1 or rnpB) and a protein subunit.</text>
</comment>
<comment type="similarity">
    <text evidence="1">Belongs to the RnpA family.</text>
</comment>
<evidence type="ECO:0000255" key="1">
    <source>
        <dbReference type="HAMAP-Rule" id="MF_00227"/>
    </source>
</evidence>
<protein>
    <recommendedName>
        <fullName evidence="1">Ribonuclease P protein component</fullName>
        <shortName evidence="1">RNase P protein</shortName>
        <shortName evidence="1">RNaseP protein</shortName>
        <ecNumber evidence="1">3.1.26.5</ecNumber>
    </recommendedName>
    <alternativeName>
        <fullName evidence="1">Protein C5</fullName>
    </alternativeName>
</protein>
<dbReference type="EC" id="3.1.26.5" evidence="1"/>
<dbReference type="EMBL" id="CP001251">
    <property type="protein sequence ID" value="ACK41453.1"/>
    <property type="molecule type" value="Genomic_DNA"/>
</dbReference>
<dbReference type="RefSeq" id="WP_012582539.1">
    <property type="nucleotide sequence ID" value="NC_011661.1"/>
</dbReference>
<dbReference type="RefSeq" id="YP_002352067.1">
    <property type="nucleotide sequence ID" value="NC_011661.1"/>
</dbReference>
<dbReference type="SMR" id="B8DYS1"/>
<dbReference type="FunCoup" id="B8DYS1">
    <property type="interactions" value="202"/>
</dbReference>
<dbReference type="STRING" id="515635.Dtur_0121"/>
<dbReference type="EnsemblBacteria" id="ACK41453">
    <property type="protein sequence ID" value="ACK41453"/>
    <property type="gene ID" value="Dtur_0121"/>
</dbReference>
<dbReference type="KEGG" id="dtu:Dtur_0121"/>
<dbReference type="PATRIC" id="fig|515635.4.peg.127"/>
<dbReference type="eggNOG" id="COG0594">
    <property type="taxonomic scope" value="Bacteria"/>
</dbReference>
<dbReference type="HOGENOM" id="CLU_117179_9_2_0"/>
<dbReference type="InParanoid" id="B8DYS1"/>
<dbReference type="OrthoDB" id="9810867at2"/>
<dbReference type="Proteomes" id="UP000007719">
    <property type="component" value="Chromosome"/>
</dbReference>
<dbReference type="GO" id="GO:0030677">
    <property type="term" value="C:ribonuclease P complex"/>
    <property type="evidence" value="ECO:0000318"/>
    <property type="project" value="GO_Central"/>
</dbReference>
<dbReference type="GO" id="GO:0042781">
    <property type="term" value="F:3'-tRNA processing endoribonuclease activity"/>
    <property type="evidence" value="ECO:0000318"/>
    <property type="project" value="GO_Central"/>
</dbReference>
<dbReference type="GO" id="GO:0004526">
    <property type="term" value="F:ribonuclease P activity"/>
    <property type="evidence" value="ECO:0000318"/>
    <property type="project" value="GO_Central"/>
</dbReference>
<dbReference type="GO" id="GO:0000049">
    <property type="term" value="F:tRNA binding"/>
    <property type="evidence" value="ECO:0007669"/>
    <property type="project" value="UniProtKB-UniRule"/>
</dbReference>
<dbReference type="GO" id="GO:0042780">
    <property type="term" value="P:tRNA 3'-end processing"/>
    <property type="evidence" value="ECO:0000318"/>
    <property type="project" value="GO_Central"/>
</dbReference>
<dbReference type="GO" id="GO:0001682">
    <property type="term" value="P:tRNA 5'-leader removal"/>
    <property type="evidence" value="ECO:0007669"/>
    <property type="project" value="UniProtKB-UniRule"/>
</dbReference>
<dbReference type="FunFam" id="3.30.230.10:FF:000021">
    <property type="entry name" value="Ribonuclease P protein component"/>
    <property type="match status" value="1"/>
</dbReference>
<dbReference type="Gene3D" id="3.30.230.10">
    <property type="match status" value="1"/>
</dbReference>
<dbReference type="HAMAP" id="MF_00227">
    <property type="entry name" value="RNase_P"/>
    <property type="match status" value="1"/>
</dbReference>
<dbReference type="InterPro" id="IPR020568">
    <property type="entry name" value="Ribosomal_Su5_D2-typ_SF"/>
</dbReference>
<dbReference type="InterPro" id="IPR014721">
    <property type="entry name" value="Ribsml_uS5_D2-typ_fold_subgr"/>
</dbReference>
<dbReference type="InterPro" id="IPR000100">
    <property type="entry name" value="RNase_P"/>
</dbReference>
<dbReference type="InterPro" id="IPR020539">
    <property type="entry name" value="RNase_P_CS"/>
</dbReference>
<dbReference type="NCBIfam" id="TIGR00188">
    <property type="entry name" value="rnpA"/>
    <property type="match status" value="1"/>
</dbReference>
<dbReference type="PANTHER" id="PTHR33992">
    <property type="entry name" value="RIBONUCLEASE P PROTEIN COMPONENT"/>
    <property type="match status" value="1"/>
</dbReference>
<dbReference type="PANTHER" id="PTHR33992:SF1">
    <property type="entry name" value="RIBONUCLEASE P PROTEIN COMPONENT"/>
    <property type="match status" value="1"/>
</dbReference>
<dbReference type="Pfam" id="PF00825">
    <property type="entry name" value="Ribonuclease_P"/>
    <property type="match status" value="1"/>
</dbReference>
<dbReference type="SUPFAM" id="SSF54211">
    <property type="entry name" value="Ribosomal protein S5 domain 2-like"/>
    <property type="match status" value="1"/>
</dbReference>
<dbReference type="PROSITE" id="PS00648">
    <property type="entry name" value="RIBONUCLEASE_P"/>
    <property type="match status" value="1"/>
</dbReference>
<keyword id="KW-0255">Endonuclease</keyword>
<keyword id="KW-0378">Hydrolase</keyword>
<keyword id="KW-0540">Nuclease</keyword>
<keyword id="KW-1185">Reference proteome</keyword>
<keyword id="KW-0694">RNA-binding</keyword>
<keyword id="KW-0819">tRNA processing</keyword>
<proteinExistence type="inferred from homology"/>
<reference key="1">
    <citation type="journal article" date="2016" name="Front. Microbiol.">
        <title>The complete genome sequence of hyperthermophile Dictyoglomus turgidum DSM 6724 reveals a specialized carbohydrate fermentor.</title>
        <authorList>
            <person name="Brumm P.J."/>
            <person name="Gowda K."/>
            <person name="Robb F.T."/>
            <person name="Mead D.A."/>
        </authorList>
    </citation>
    <scope>NUCLEOTIDE SEQUENCE [LARGE SCALE GENOMIC DNA]</scope>
    <source>
        <strain>DSM 6724 / Z-1310</strain>
    </source>
</reference>
<accession>B8DYS1</accession>
<sequence>MGLYFFPKEERLKKQEDFLRILREGKPYSLSKNFVVYIRKGAEKRRIGISVNKKVGKAVVRNKIKRLIREVYRLHRPYLKEDIEMLVIVKPGENIKNLDFHKVKEMLIKIWEKAGILKK</sequence>